<keyword id="KW-0240">DNA-directed RNA polymerase</keyword>
<keyword id="KW-0548">Nucleotidyltransferase</keyword>
<keyword id="KW-0804">Transcription</keyword>
<keyword id="KW-0808">Transferase</keyword>
<dbReference type="EC" id="2.7.7.6" evidence="1"/>
<dbReference type="EMBL" id="CP000826">
    <property type="protein sequence ID" value="ABV43613.1"/>
    <property type="molecule type" value="Genomic_DNA"/>
</dbReference>
<dbReference type="SMR" id="A8GKH3"/>
<dbReference type="STRING" id="399741.Spro_4519"/>
<dbReference type="KEGG" id="spe:Spro_4519"/>
<dbReference type="eggNOG" id="COG0202">
    <property type="taxonomic scope" value="Bacteria"/>
</dbReference>
<dbReference type="HOGENOM" id="CLU_053084_0_0_6"/>
<dbReference type="OrthoDB" id="9805706at2"/>
<dbReference type="GO" id="GO:0005737">
    <property type="term" value="C:cytoplasm"/>
    <property type="evidence" value="ECO:0007669"/>
    <property type="project" value="UniProtKB-ARBA"/>
</dbReference>
<dbReference type="GO" id="GO:0000428">
    <property type="term" value="C:DNA-directed RNA polymerase complex"/>
    <property type="evidence" value="ECO:0007669"/>
    <property type="project" value="UniProtKB-KW"/>
</dbReference>
<dbReference type="GO" id="GO:0003677">
    <property type="term" value="F:DNA binding"/>
    <property type="evidence" value="ECO:0007669"/>
    <property type="project" value="UniProtKB-UniRule"/>
</dbReference>
<dbReference type="GO" id="GO:0003899">
    <property type="term" value="F:DNA-directed RNA polymerase activity"/>
    <property type="evidence" value="ECO:0007669"/>
    <property type="project" value="UniProtKB-UniRule"/>
</dbReference>
<dbReference type="GO" id="GO:0046983">
    <property type="term" value="F:protein dimerization activity"/>
    <property type="evidence" value="ECO:0007669"/>
    <property type="project" value="InterPro"/>
</dbReference>
<dbReference type="GO" id="GO:0006351">
    <property type="term" value="P:DNA-templated transcription"/>
    <property type="evidence" value="ECO:0007669"/>
    <property type="project" value="UniProtKB-UniRule"/>
</dbReference>
<dbReference type="CDD" id="cd06928">
    <property type="entry name" value="RNAP_alpha_NTD"/>
    <property type="match status" value="1"/>
</dbReference>
<dbReference type="FunFam" id="1.10.150.20:FF:000001">
    <property type="entry name" value="DNA-directed RNA polymerase subunit alpha"/>
    <property type="match status" value="1"/>
</dbReference>
<dbReference type="FunFam" id="2.170.120.12:FF:000001">
    <property type="entry name" value="DNA-directed RNA polymerase subunit alpha"/>
    <property type="match status" value="1"/>
</dbReference>
<dbReference type="Gene3D" id="1.10.150.20">
    <property type="entry name" value="5' to 3' exonuclease, C-terminal subdomain"/>
    <property type="match status" value="1"/>
</dbReference>
<dbReference type="Gene3D" id="2.170.120.12">
    <property type="entry name" value="DNA-directed RNA polymerase, insert domain"/>
    <property type="match status" value="1"/>
</dbReference>
<dbReference type="Gene3D" id="3.30.1360.10">
    <property type="entry name" value="RNA polymerase, RBP11-like subunit"/>
    <property type="match status" value="1"/>
</dbReference>
<dbReference type="HAMAP" id="MF_00059">
    <property type="entry name" value="RNApol_bact_RpoA"/>
    <property type="match status" value="1"/>
</dbReference>
<dbReference type="InterPro" id="IPR011262">
    <property type="entry name" value="DNA-dir_RNA_pol_insert"/>
</dbReference>
<dbReference type="InterPro" id="IPR011263">
    <property type="entry name" value="DNA-dir_RNA_pol_RpoA/D/Rpb3"/>
</dbReference>
<dbReference type="InterPro" id="IPR011773">
    <property type="entry name" value="DNA-dir_RpoA"/>
</dbReference>
<dbReference type="InterPro" id="IPR036603">
    <property type="entry name" value="RBP11-like"/>
</dbReference>
<dbReference type="InterPro" id="IPR011260">
    <property type="entry name" value="RNAP_asu_C"/>
</dbReference>
<dbReference type="InterPro" id="IPR036643">
    <property type="entry name" value="RNApol_insert_sf"/>
</dbReference>
<dbReference type="NCBIfam" id="NF003513">
    <property type="entry name" value="PRK05182.1-2"/>
    <property type="match status" value="1"/>
</dbReference>
<dbReference type="NCBIfam" id="NF003519">
    <property type="entry name" value="PRK05182.2-5"/>
    <property type="match status" value="1"/>
</dbReference>
<dbReference type="NCBIfam" id="TIGR02027">
    <property type="entry name" value="rpoA"/>
    <property type="match status" value="1"/>
</dbReference>
<dbReference type="Pfam" id="PF01000">
    <property type="entry name" value="RNA_pol_A_bac"/>
    <property type="match status" value="1"/>
</dbReference>
<dbReference type="Pfam" id="PF03118">
    <property type="entry name" value="RNA_pol_A_CTD"/>
    <property type="match status" value="1"/>
</dbReference>
<dbReference type="Pfam" id="PF01193">
    <property type="entry name" value="RNA_pol_L"/>
    <property type="match status" value="1"/>
</dbReference>
<dbReference type="SMART" id="SM00662">
    <property type="entry name" value="RPOLD"/>
    <property type="match status" value="1"/>
</dbReference>
<dbReference type="SUPFAM" id="SSF47789">
    <property type="entry name" value="C-terminal domain of RNA polymerase alpha subunit"/>
    <property type="match status" value="1"/>
</dbReference>
<dbReference type="SUPFAM" id="SSF56553">
    <property type="entry name" value="Insert subdomain of RNA polymerase alpha subunit"/>
    <property type="match status" value="1"/>
</dbReference>
<dbReference type="SUPFAM" id="SSF55257">
    <property type="entry name" value="RBP11-like subunits of RNA polymerase"/>
    <property type="match status" value="1"/>
</dbReference>
<organism>
    <name type="scientific">Serratia proteamaculans (strain 568)</name>
    <dbReference type="NCBI Taxonomy" id="399741"/>
    <lineage>
        <taxon>Bacteria</taxon>
        <taxon>Pseudomonadati</taxon>
        <taxon>Pseudomonadota</taxon>
        <taxon>Gammaproteobacteria</taxon>
        <taxon>Enterobacterales</taxon>
        <taxon>Yersiniaceae</taxon>
        <taxon>Serratia</taxon>
    </lineage>
</organism>
<proteinExistence type="inferred from homology"/>
<accession>A8GKH3</accession>
<sequence length="329" mass="36466">MQGSVTEFLKPRLVDIEQVSSTHAKVTLEPLERGFGHTLGNALRRILLSSMPGCAVTEVEIDGVLHEYSTKEGVQEDILEILLNLKGLAVRVQGKDEVILTLNKSGIGPVTAADITHDGDVEIVKPQHVICHLTDENAAISMRIKVQRGRGYVPASARIHSEEDERPIGRLLVDACYSPVERIAYNVEAARVEQRTDLDKLVIEMETNGTIDPEEAIRRAATILAEQLEAFVDLRDVRQPEVKEEKPEFDPILLRPVDDLELTVRSANCLKAEAIHYIGDLVQRTEVELLKTPNLGKKSLTEIKDVLASRGLSLGMRLENWPPASIADE</sequence>
<comment type="function">
    <text evidence="1">DNA-dependent RNA polymerase catalyzes the transcription of DNA into RNA using the four ribonucleoside triphosphates as substrates.</text>
</comment>
<comment type="catalytic activity">
    <reaction evidence="1">
        <text>RNA(n) + a ribonucleoside 5'-triphosphate = RNA(n+1) + diphosphate</text>
        <dbReference type="Rhea" id="RHEA:21248"/>
        <dbReference type="Rhea" id="RHEA-COMP:14527"/>
        <dbReference type="Rhea" id="RHEA-COMP:17342"/>
        <dbReference type="ChEBI" id="CHEBI:33019"/>
        <dbReference type="ChEBI" id="CHEBI:61557"/>
        <dbReference type="ChEBI" id="CHEBI:140395"/>
        <dbReference type="EC" id="2.7.7.6"/>
    </reaction>
</comment>
<comment type="subunit">
    <text evidence="1">Homodimer. The RNAP catalytic core consists of 2 alpha, 1 beta, 1 beta' and 1 omega subunit. When a sigma factor is associated with the core the holoenzyme is formed, which can initiate transcription.</text>
</comment>
<comment type="domain">
    <text evidence="1">The N-terminal domain is essential for RNAP assembly and basal transcription, whereas the C-terminal domain is involved in interaction with transcriptional regulators and with upstream promoter elements.</text>
</comment>
<comment type="similarity">
    <text evidence="1">Belongs to the RNA polymerase alpha chain family.</text>
</comment>
<reference key="1">
    <citation type="submission" date="2007-09" db="EMBL/GenBank/DDBJ databases">
        <title>Complete sequence of chromosome of Serratia proteamaculans 568.</title>
        <authorList>
            <consortium name="US DOE Joint Genome Institute"/>
            <person name="Copeland A."/>
            <person name="Lucas S."/>
            <person name="Lapidus A."/>
            <person name="Barry K."/>
            <person name="Glavina del Rio T."/>
            <person name="Dalin E."/>
            <person name="Tice H."/>
            <person name="Pitluck S."/>
            <person name="Chain P."/>
            <person name="Malfatti S."/>
            <person name="Shin M."/>
            <person name="Vergez L."/>
            <person name="Schmutz J."/>
            <person name="Larimer F."/>
            <person name="Land M."/>
            <person name="Hauser L."/>
            <person name="Kyrpides N."/>
            <person name="Kim E."/>
            <person name="Taghavi S."/>
            <person name="Newman L."/>
            <person name="Vangronsveld J."/>
            <person name="van der Lelie D."/>
            <person name="Richardson P."/>
        </authorList>
    </citation>
    <scope>NUCLEOTIDE SEQUENCE [LARGE SCALE GENOMIC DNA]</scope>
    <source>
        <strain>568</strain>
    </source>
</reference>
<feature type="chain" id="PRO_0000323651" description="DNA-directed RNA polymerase subunit alpha">
    <location>
        <begin position="1"/>
        <end position="329"/>
    </location>
</feature>
<feature type="region of interest" description="Alpha N-terminal domain (alpha-NTD)" evidence="1">
    <location>
        <begin position="1"/>
        <end position="235"/>
    </location>
</feature>
<feature type="region of interest" description="Alpha C-terminal domain (alpha-CTD)" evidence="1">
    <location>
        <begin position="249"/>
        <end position="329"/>
    </location>
</feature>
<gene>
    <name evidence="1" type="primary">rpoA</name>
    <name type="ordered locus">Spro_4519</name>
</gene>
<name>RPOA_SERP5</name>
<protein>
    <recommendedName>
        <fullName evidence="1">DNA-directed RNA polymerase subunit alpha</fullName>
        <shortName evidence="1">RNAP subunit alpha</shortName>
        <ecNumber evidence="1">2.7.7.6</ecNumber>
    </recommendedName>
    <alternativeName>
        <fullName evidence="1">RNA polymerase subunit alpha</fullName>
    </alternativeName>
    <alternativeName>
        <fullName evidence="1">Transcriptase subunit alpha</fullName>
    </alternativeName>
</protein>
<evidence type="ECO:0000255" key="1">
    <source>
        <dbReference type="HAMAP-Rule" id="MF_00059"/>
    </source>
</evidence>